<protein>
    <recommendedName>
        <fullName evidence="1">Elongation factor Ts</fullName>
        <shortName evidence="1">EF-Ts</shortName>
    </recommendedName>
</protein>
<proteinExistence type="inferred from homology"/>
<reference key="1">
    <citation type="journal article" date="2008" name="PLoS ONE">
        <title>Genetic basis of virulence attenuation revealed by comparative genomic analysis of Mycobacterium tuberculosis strain H37Ra versus H37Rv.</title>
        <authorList>
            <person name="Zheng H."/>
            <person name="Lu L."/>
            <person name="Wang B."/>
            <person name="Pu S."/>
            <person name="Zhang X."/>
            <person name="Zhu G."/>
            <person name="Shi W."/>
            <person name="Zhang L."/>
            <person name="Wang H."/>
            <person name="Wang S."/>
            <person name="Zhao G."/>
            <person name="Zhang Y."/>
        </authorList>
    </citation>
    <scope>NUCLEOTIDE SEQUENCE [LARGE SCALE GENOMIC DNA]</scope>
    <source>
        <strain>ATCC 25177 / H37Ra</strain>
    </source>
</reference>
<accession>A5U6P4</accession>
<comment type="function">
    <text evidence="1">Associates with the EF-Tu.GDP complex and induces the exchange of GDP to GTP. It remains bound to the aminoacyl-tRNA.EF-Tu.GTP complex up to the GTP hydrolysis stage on the ribosome.</text>
</comment>
<comment type="subcellular location">
    <subcellularLocation>
        <location evidence="1">Cytoplasm</location>
    </subcellularLocation>
</comment>
<comment type="similarity">
    <text evidence="1">Belongs to the EF-Ts family.</text>
</comment>
<organism>
    <name type="scientific">Mycobacterium tuberculosis (strain ATCC 25177 / H37Ra)</name>
    <dbReference type="NCBI Taxonomy" id="419947"/>
    <lineage>
        <taxon>Bacteria</taxon>
        <taxon>Bacillati</taxon>
        <taxon>Actinomycetota</taxon>
        <taxon>Actinomycetes</taxon>
        <taxon>Mycobacteriales</taxon>
        <taxon>Mycobacteriaceae</taxon>
        <taxon>Mycobacterium</taxon>
        <taxon>Mycobacterium tuberculosis complex</taxon>
    </lineage>
</organism>
<feature type="chain" id="PRO_1000006132" description="Elongation factor Ts">
    <location>
        <begin position="1"/>
        <end position="271"/>
    </location>
</feature>
<feature type="region of interest" description="Involved in Mg(2+) ion dislocation from EF-Tu" evidence="1">
    <location>
        <begin position="76"/>
        <end position="79"/>
    </location>
</feature>
<evidence type="ECO:0000255" key="1">
    <source>
        <dbReference type="HAMAP-Rule" id="MF_00050"/>
    </source>
</evidence>
<gene>
    <name evidence="1" type="primary">tsf</name>
    <name type="ordered locus">MRA_2914</name>
</gene>
<keyword id="KW-0963">Cytoplasm</keyword>
<keyword id="KW-0251">Elongation factor</keyword>
<keyword id="KW-0648">Protein biosynthesis</keyword>
<keyword id="KW-1185">Reference proteome</keyword>
<name>EFTS_MYCTA</name>
<sequence length="271" mass="28755">MANFTAADVKRLRELTGAGMLACKNALAETDGDFDKAVEALRIKGAKDVGKRAERATAEGLVAAKDGALIELNCETDFVAKNAEFQTLADQVVAAAAAAKPADVDALKGASIGDKTVEQAIAELSAKIGEKLELRRVAIFDGTVEAYLHRRSADLPPAVGVLVEYRGDDAAAAHAVALQIAALRARYLSRDDVPEDIVASERRIAEETARAEGKPEQALPKIVEGRLNGFFKDAVLLEQASVSDNKKTVKALLDVAGVTVTRFVRFEVGQA</sequence>
<dbReference type="EMBL" id="CP000611">
    <property type="protein sequence ID" value="ABQ74694.1"/>
    <property type="molecule type" value="Genomic_DNA"/>
</dbReference>
<dbReference type="RefSeq" id="WP_003899527.1">
    <property type="nucleotide sequence ID" value="NZ_CP016972.1"/>
</dbReference>
<dbReference type="SMR" id="A5U6P4"/>
<dbReference type="GeneID" id="45426877"/>
<dbReference type="KEGG" id="mra:MRA_2914"/>
<dbReference type="eggNOG" id="COG0264">
    <property type="taxonomic scope" value="Bacteria"/>
</dbReference>
<dbReference type="HOGENOM" id="CLU_047155_0_0_11"/>
<dbReference type="Proteomes" id="UP000001988">
    <property type="component" value="Chromosome"/>
</dbReference>
<dbReference type="GO" id="GO:0005737">
    <property type="term" value="C:cytoplasm"/>
    <property type="evidence" value="ECO:0007669"/>
    <property type="project" value="UniProtKB-SubCell"/>
</dbReference>
<dbReference type="GO" id="GO:0003746">
    <property type="term" value="F:translation elongation factor activity"/>
    <property type="evidence" value="ECO:0007669"/>
    <property type="project" value="UniProtKB-UniRule"/>
</dbReference>
<dbReference type="CDD" id="cd14275">
    <property type="entry name" value="UBA_EF-Ts"/>
    <property type="match status" value="1"/>
</dbReference>
<dbReference type="FunFam" id="1.10.286.20:FF:000001">
    <property type="entry name" value="Elongation factor Ts"/>
    <property type="match status" value="1"/>
</dbReference>
<dbReference type="FunFam" id="1.10.8.10:FF:000001">
    <property type="entry name" value="Elongation factor Ts"/>
    <property type="match status" value="1"/>
</dbReference>
<dbReference type="FunFam" id="3.30.479.20:FF:000021">
    <property type="entry name" value="Elongation factor Ts"/>
    <property type="match status" value="1"/>
</dbReference>
<dbReference type="Gene3D" id="1.10.286.20">
    <property type="match status" value="1"/>
</dbReference>
<dbReference type="Gene3D" id="1.10.8.10">
    <property type="entry name" value="DNA helicase RuvA subunit, C-terminal domain"/>
    <property type="match status" value="1"/>
</dbReference>
<dbReference type="Gene3D" id="3.30.479.20">
    <property type="entry name" value="Elongation factor Ts, dimerisation domain"/>
    <property type="match status" value="2"/>
</dbReference>
<dbReference type="HAMAP" id="MF_00050">
    <property type="entry name" value="EF_Ts"/>
    <property type="match status" value="1"/>
</dbReference>
<dbReference type="InterPro" id="IPR036402">
    <property type="entry name" value="EF-Ts_dimer_sf"/>
</dbReference>
<dbReference type="InterPro" id="IPR001816">
    <property type="entry name" value="Transl_elong_EFTs/EF1B"/>
</dbReference>
<dbReference type="InterPro" id="IPR014039">
    <property type="entry name" value="Transl_elong_EFTs/EF1B_dimer"/>
</dbReference>
<dbReference type="InterPro" id="IPR018101">
    <property type="entry name" value="Transl_elong_Ts_CS"/>
</dbReference>
<dbReference type="InterPro" id="IPR009060">
    <property type="entry name" value="UBA-like_sf"/>
</dbReference>
<dbReference type="NCBIfam" id="TIGR00116">
    <property type="entry name" value="tsf"/>
    <property type="match status" value="1"/>
</dbReference>
<dbReference type="PANTHER" id="PTHR11741">
    <property type="entry name" value="ELONGATION FACTOR TS"/>
    <property type="match status" value="1"/>
</dbReference>
<dbReference type="PANTHER" id="PTHR11741:SF0">
    <property type="entry name" value="ELONGATION FACTOR TS, MITOCHONDRIAL"/>
    <property type="match status" value="1"/>
</dbReference>
<dbReference type="Pfam" id="PF00889">
    <property type="entry name" value="EF_TS"/>
    <property type="match status" value="1"/>
</dbReference>
<dbReference type="SUPFAM" id="SSF54713">
    <property type="entry name" value="Elongation factor Ts (EF-Ts), dimerisation domain"/>
    <property type="match status" value="2"/>
</dbReference>
<dbReference type="SUPFAM" id="SSF46934">
    <property type="entry name" value="UBA-like"/>
    <property type="match status" value="1"/>
</dbReference>
<dbReference type="PROSITE" id="PS01126">
    <property type="entry name" value="EF_TS_1"/>
    <property type="match status" value="1"/>
</dbReference>
<dbReference type="PROSITE" id="PS01127">
    <property type="entry name" value="EF_TS_2"/>
    <property type="match status" value="1"/>
</dbReference>